<comment type="function">
    <text evidence="1">NDH-1 shuttles electrons from NADH, via FMN and iron-sulfur (Fe-S) centers, to quinones in the respiratory chain. The immediate electron acceptor for the enzyme in this species is believed to be a menaquinone. Couples the redox reaction to proton translocation (for every two electrons transferred, four hydrogen ions are translocated across the cytoplasmic membrane), and thus conserves the redox energy in a proton gradient.</text>
</comment>
<comment type="catalytic activity">
    <reaction evidence="1">
        <text>a quinone + NADH + 5 H(+)(in) = a quinol + NAD(+) + 4 H(+)(out)</text>
        <dbReference type="Rhea" id="RHEA:57888"/>
        <dbReference type="ChEBI" id="CHEBI:15378"/>
        <dbReference type="ChEBI" id="CHEBI:24646"/>
        <dbReference type="ChEBI" id="CHEBI:57540"/>
        <dbReference type="ChEBI" id="CHEBI:57945"/>
        <dbReference type="ChEBI" id="CHEBI:132124"/>
    </reaction>
</comment>
<comment type="cofactor">
    <cofactor evidence="1">
        <name>[4Fe-4S] cluster</name>
        <dbReference type="ChEBI" id="CHEBI:49883"/>
    </cofactor>
    <text evidence="1">Binds 1 [4Fe-4S] cluster.</text>
</comment>
<comment type="subunit">
    <text evidence="1">NDH-1 is composed of 14 different subunits. Subunits NuoB, C, D, E, F, and G constitute the peripheral sector of the complex.</text>
</comment>
<comment type="subcellular location">
    <subcellularLocation>
        <location evidence="1">Cell membrane</location>
        <topology evidence="1">Peripheral membrane protein</topology>
        <orientation evidence="1">Cytoplasmic side</orientation>
    </subcellularLocation>
</comment>
<comment type="similarity">
    <text evidence="1">Belongs to the complex I 20 kDa subunit family.</text>
</comment>
<dbReference type="EC" id="7.1.1.-" evidence="1"/>
<dbReference type="EMBL" id="AP009493">
    <property type="protein sequence ID" value="BAG19753.1"/>
    <property type="molecule type" value="Genomic_DNA"/>
</dbReference>
<dbReference type="RefSeq" id="WP_012379517.1">
    <property type="nucleotide sequence ID" value="NC_010572.1"/>
</dbReference>
<dbReference type="SMR" id="B1W4V9"/>
<dbReference type="KEGG" id="sgr:SGR_2924"/>
<dbReference type="PATRIC" id="fig|455632.4.peg.2985"/>
<dbReference type="eggNOG" id="COG0377">
    <property type="taxonomic scope" value="Bacteria"/>
</dbReference>
<dbReference type="HOGENOM" id="CLU_055737_4_1_11"/>
<dbReference type="Proteomes" id="UP000001685">
    <property type="component" value="Chromosome"/>
</dbReference>
<dbReference type="GO" id="GO:0005886">
    <property type="term" value="C:plasma membrane"/>
    <property type="evidence" value="ECO:0007669"/>
    <property type="project" value="UniProtKB-SubCell"/>
</dbReference>
<dbReference type="GO" id="GO:0045271">
    <property type="term" value="C:respiratory chain complex I"/>
    <property type="evidence" value="ECO:0007669"/>
    <property type="project" value="TreeGrafter"/>
</dbReference>
<dbReference type="GO" id="GO:0051539">
    <property type="term" value="F:4 iron, 4 sulfur cluster binding"/>
    <property type="evidence" value="ECO:0007669"/>
    <property type="project" value="UniProtKB-KW"/>
</dbReference>
<dbReference type="GO" id="GO:0005506">
    <property type="term" value="F:iron ion binding"/>
    <property type="evidence" value="ECO:0007669"/>
    <property type="project" value="UniProtKB-UniRule"/>
</dbReference>
<dbReference type="GO" id="GO:0008137">
    <property type="term" value="F:NADH dehydrogenase (ubiquinone) activity"/>
    <property type="evidence" value="ECO:0007669"/>
    <property type="project" value="InterPro"/>
</dbReference>
<dbReference type="GO" id="GO:0050136">
    <property type="term" value="F:NADH:ubiquinone reductase (non-electrogenic) activity"/>
    <property type="evidence" value="ECO:0007669"/>
    <property type="project" value="UniProtKB-UniRule"/>
</dbReference>
<dbReference type="GO" id="GO:0048038">
    <property type="term" value="F:quinone binding"/>
    <property type="evidence" value="ECO:0007669"/>
    <property type="project" value="UniProtKB-KW"/>
</dbReference>
<dbReference type="GO" id="GO:0009060">
    <property type="term" value="P:aerobic respiration"/>
    <property type="evidence" value="ECO:0007669"/>
    <property type="project" value="TreeGrafter"/>
</dbReference>
<dbReference type="GO" id="GO:0015990">
    <property type="term" value="P:electron transport coupled proton transport"/>
    <property type="evidence" value="ECO:0007669"/>
    <property type="project" value="TreeGrafter"/>
</dbReference>
<dbReference type="FunFam" id="3.40.50.12280:FF:000002">
    <property type="entry name" value="NADH-quinone oxidoreductase subunit B"/>
    <property type="match status" value="1"/>
</dbReference>
<dbReference type="Gene3D" id="3.40.50.12280">
    <property type="match status" value="1"/>
</dbReference>
<dbReference type="HAMAP" id="MF_01356">
    <property type="entry name" value="NDH1_NuoB"/>
    <property type="match status" value="1"/>
</dbReference>
<dbReference type="InterPro" id="IPR006137">
    <property type="entry name" value="NADH_UbQ_OxRdtase-like_20kDa"/>
</dbReference>
<dbReference type="InterPro" id="IPR006138">
    <property type="entry name" value="NADH_UQ_OxRdtase_20Kd_su"/>
</dbReference>
<dbReference type="NCBIfam" id="TIGR01957">
    <property type="entry name" value="nuoB_fam"/>
    <property type="match status" value="1"/>
</dbReference>
<dbReference type="NCBIfam" id="NF005012">
    <property type="entry name" value="PRK06411.1"/>
    <property type="match status" value="1"/>
</dbReference>
<dbReference type="PANTHER" id="PTHR11995">
    <property type="entry name" value="NADH DEHYDROGENASE"/>
    <property type="match status" value="1"/>
</dbReference>
<dbReference type="PANTHER" id="PTHR11995:SF33">
    <property type="entry name" value="NADH-QUINONE OXIDOREDUCTASE SUBUNIT B 2"/>
    <property type="match status" value="1"/>
</dbReference>
<dbReference type="Pfam" id="PF01058">
    <property type="entry name" value="Oxidored_q6"/>
    <property type="match status" value="1"/>
</dbReference>
<dbReference type="SUPFAM" id="SSF56770">
    <property type="entry name" value="HydA/Nqo6-like"/>
    <property type="match status" value="1"/>
</dbReference>
<feature type="chain" id="PRO_0000376390" description="NADH-quinone oxidoreductase subunit B 2">
    <location>
        <begin position="1"/>
        <end position="235"/>
    </location>
</feature>
<feature type="region of interest" description="Disordered" evidence="2">
    <location>
        <begin position="1"/>
        <end position="24"/>
    </location>
</feature>
<feature type="region of interest" description="Disordered" evidence="2">
    <location>
        <begin position="188"/>
        <end position="235"/>
    </location>
</feature>
<feature type="compositionally biased region" description="Low complexity" evidence="2">
    <location>
        <begin position="1"/>
        <end position="14"/>
    </location>
</feature>
<feature type="binding site" evidence="1">
    <location>
        <position position="63"/>
    </location>
    <ligand>
        <name>[4Fe-4S] cluster</name>
        <dbReference type="ChEBI" id="CHEBI:49883"/>
    </ligand>
</feature>
<feature type="binding site" evidence="1">
    <location>
        <position position="64"/>
    </location>
    <ligand>
        <name>[4Fe-4S] cluster</name>
        <dbReference type="ChEBI" id="CHEBI:49883"/>
    </ligand>
</feature>
<feature type="binding site" evidence="1">
    <location>
        <position position="129"/>
    </location>
    <ligand>
        <name>[4Fe-4S] cluster</name>
        <dbReference type="ChEBI" id="CHEBI:49883"/>
    </ligand>
</feature>
<feature type="binding site" evidence="1">
    <location>
        <position position="159"/>
    </location>
    <ligand>
        <name>[4Fe-4S] cluster</name>
        <dbReference type="ChEBI" id="CHEBI:49883"/>
    </ligand>
</feature>
<organism>
    <name type="scientific">Streptomyces griseus subsp. griseus (strain JCM 4626 / CBS 651.72 / NBRC 13350 / KCC S-0626 / ISP 5235)</name>
    <dbReference type="NCBI Taxonomy" id="455632"/>
    <lineage>
        <taxon>Bacteria</taxon>
        <taxon>Bacillati</taxon>
        <taxon>Actinomycetota</taxon>
        <taxon>Actinomycetes</taxon>
        <taxon>Kitasatosporales</taxon>
        <taxon>Streptomycetaceae</taxon>
        <taxon>Streptomyces</taxon>
    </lineage>
</organism>
<evidence type="ECO:0000255" key="1">
    <source>
        <dbReference type="HAMAP-Rule" id="MF_01356"/>
    </source>
</evidence>
<evidence type="ECO:0000256" key="2">
    <source>
        <dbReference type="SAM" id="MobiDB-lite"/>
    </source>
</evidence>
<proteinExistence type="inferred from homology"/>
<reference key="1">
    <citation type="journal article" date="2008" name="J. Bacteriol.">
        <title>Genome sequence of the streptomycin-producing microorganism Streptomyces griseus IFO 13350.</title>
        <authorList>
            <person name="Ohnishi Y."/>
            <person name="Ishikawa J."/>
            <person name="Hara H."/>
            <person name="Suzuki H."/>
            <person name="Ikenoya M."/>
            <person name="Ikeda H."/>
            <person name="Yamashita A."/>
            <person name="Hattori M."/>
            <person name="Horinouchi S."/>
        </authorList>
    </citation>
    <scope>NUCLEOTIDE SEQUENCE [LARGE SCALE GENOMIC DNA]</scope>
    <source>
        <strain>JCM 4626 / CBS 651.72 / NBRC 13350 / KCC S-0626 / ISP 5235</strain>
    </source>
</reference>
<name>NUOB2_STRGG</name>
<accession>B1W4V9</accession>
<protein>
    <recommendedName>
        <fullName evidence="1">NADH-quinone oxidoreductase subunit B 2</fullName>
        <ecNumber evidence="1">7.1.1.-</ecNumber>
    </recommendedName>
    <alternativeName>
        <fullName evidence="1">NADH dehydrogenase I subunit B 2</fullName>
    </alternativeName>
    <alternativeName>
        <fullName evidence="1">NDH-1 subunit B 2</fullName>
    </alternativeName>
</protein>
<gene>
    <name evidence="1" type="primary">nuoB2</name>
    <name type="ordered locus">SGR_2924</name>
</gene>
<keyword id="KW-0004">4Fe-4S</keyword>
<keyword id="KW-1003">Cell membrane</keyword>
<keyword id="KW-0408">Iron</keyword>
<keyword id="KW-0411">Iron-sulfur</keyword>
<keyword id="KW-0472">Membrane</keyword>
<keyword id="KW-0479">Metal-binding</keyword>
<keyword id="KW-0520">NAD</keyword>
<keyword id="KW-0874">Quinone</keyword>
<keyword id="KW-1278">Translocase</keyword>
<keyword id="KW-0813">Transport</keyword>
<sequence length="235" mass="24989">MGLTSRPTPASRQPASPPPADPVLLPEPKRLGVLSRLAPEPMKVVLNWGRRYSLWVFNFGLACCAIEFIAASMARHDFIRLGVIPFAPGPRQADLMIVSGTVTDKMAPAVKRLYEQMPEPKYVISFGACSNCGGPYWDSYSVTKGVDQIIPVDVYVPGCPPRPEALLQGILKLQEKIARESLAERYATGATGGGPSTDALRSGLVAAPTAPGPTAPASTAPGPTAPAPTQDEERR</sequence>